<sequence length="864" mass="96134">MASSESRYSPTSLEPKWQQRWQEMGLDQTPEPSAERAENFYALSMFPYPSGNLHMGHVRNYVITDVIARLMRLKGKRVLHPMGWDAFGLPAENAAIERGVDPADWTDRNIAQMREQLQRLGLSIDWSREVATCHSDYYRWTQWLFLQFLNADLAYRKEATVNWDPIDQTVLANEQVDADGRSWRSGALAEKRKLRQWFLKITAVADELLDDLEQLKGWPERVRTMQANWIGRSSGATLRFAIEADGKQAIEVFTTRPDTVFGVSYVVLAPEHDLVDQLTSADQRQAVEAFRQSLQSISEQDRVADDRPKRGVATGGTVQHPFTGQAVPVWIADYVLPDYGTGAVMGVPAHDSRDFAFAKQYDLPITTVVVEPGQAPDSGEPSEAFTGLGELVGSADFDGLQGEEAKTAIIQAAEQRGVGAAKITFRLRDWLISRQRYWGCPIPVIHCDDCGVVPVPESDLPVELPRDVDLSGSGGSPLERATEWKQVRCPKCGKPATRETDTMDTFMCSSWYYLRYTDANNDSAAFTNASIDAWMPVDQYVGGVEHAILHLLYSRFFTKVLQQRNLVSCSEPFQKLLTQGMVQGVTYRNPKTRKYIAPSAVSDPNQPTDPDDGEALEVFFEKMSKSKYNGVDPGAVVDRYGADTARMFILFKAPPEKDLEWDDADVEGQFRFLQRIWRLCDGAKASGLQLQSPLPLPAELTPAETDLRRAVHTAIEAVSDDLQGDELQFNTAVSELMKLSNAMAGQLEAVSTAVAQEAVRSLLLLLAPFAPHLADELWEQLQGSGSIHQQRWPEVDASALVRDTITVVLQVKGKVRGNLEVPAAISKDELEQVALASDVAQKWLEGNAPKRVIVVPGKLVNLVP</sequence>
<name>SYL_SYNR3</name>
<accession>A5GT82</accession>
<evidence type="ECO:0000255" key="1">
    <source>
        <dbReference type="HAMAP-Rule" id="MF_00049"/>
    </source>
</evidence>
<evidence type="ECO:0000256" key="2">
    <source>
        <dbReference type="SAM" id="MobiDB-lite"/>
    </source>
</evidence>
<proteinExistence type="inferred from homology"/>
<protein>
    <recommendedName>
        <fullName evidence="1">Leucine--tRNA ligase</fullName>
        <ecNumber evidence="1">6.1.1.4</ecNumber>
    </recommendedName>
    <alternativeName>
        <fullName evidence="1">Leucyl-tRNA synthetase</fullName>
        <shortName evidence="1">LeuRS</shortName>
    </alternativeName>
</protein>
<organism>
    <name type="scientific">Synechococcus sp. (strain RCC307)</name>
    <dbReference type="NCBI Taxonomy" id="316278"/>
    <lineage>
        <taxon>Bacteria</taxon>
        <taxon>Bacillati</taxon>
        <taxon>Cyanobacteriota</taxon>
        <taxon>Cyanophyceae</taxon>
        <taxon>Synechococcales</taxon>
        <taxon>Synechococcaceae</taxon>
        <taxon>Synechococcus</taxon>
    </lineage>
</organism>
<feature type="chain" id="PRO_0000334831" description="Leucine--tRNA ligase">
    <location>
        <begin position="1"/>
        <end position="864"/>
    </location>
</feature>
<feature type="region of interest" description="Disordered" evidence="2">
    <location>
        <begin position="298"/>
        <end position="317"/>
    </location>
</feature>
<feature type="short sequence motif" description="'HIGH' region">
    <location>
        <begin position="47"/>
        <end position="57"/>
    </location>
</feature>
<feature type="short sequence motif" description="'KMSKS' region">
    <location>
        <begin position="622"/>
        <end position="626"/>
    </location>
</feature>
<feature type="compositionally biased region" description="Basic and acidic residues" evidence="2">
    <location>
        <begin position="299"/>
        <end position="309"/>
    </location>
</feature>
<feature type="binding site" evidence="1">
    <location>
        <position position="625"/>
    </location>
    <ligand>
        <name>ATP</name>
        <dbReference type="ChEBI" id="CHEBI:30616"/>
    </ligand>
</feature>
<gene>
    <name evidence="1" type="primary">leuS</name>
    <name type="ordered locus">SynRCC307_1188</name>
</gene>
<comment type="catalytic activity">
    <reaction evidence="1">
        <text>tRNA(Leu) + L-leucine + ATP = L-leucyl-tRNA(Leu) + AMP + diphosphate</text>
        <dbReference type="Rhea" id="RHEA:11688"/>
        <dbReference type="Rhea" id="RHEA-COMP:9613"/>
        <dbReference type="Rhea" id="RHEA-COMP:9622"/>
        <dbReference type="ChEBI" id="CHEBI:30616"/>
        <dbReference type="ChEBI" id="CHEBI:33019"/>
        <dbReference type="ChEBI" id="CHEBI:57427"/>
        <dbReference type="ChEBI" id="CHEBI:78442"/>
        <dbReference type="ChEBI" id="CHEBI:78494"/>
        <dbReference type="ChEBI" id="CHEBI:456215"/>
        <dbReference type="EC" id="6.1.1.4"/>
    </reaction>
</comment>
<comment type="subcellular location">
    <subcellularLocation>
        <location evidence="1">Cytoplasm</location>
    </subcellularLocation>
</comment>
<comment type="similarity">
    <text evidence="1">Belongs to the class-I aminoacyl-tRNA synthetase family.</text>
</comment>
<keyword id="KW-0030">Aminoacyl-tRNA synthetase</keyword>
<keyword id="KW-0067">ATP-binding</keyword>
<keyword id="KW-0963">Cytoplasm</keyword>
<keyword id="KW-0436">Ligase</keyword>
<keyword id="KW-0547">Nucleotide-binding</keyword>
<keyword id="KW-0648">Protein biosynthesis</keyword>
<keyword id="KW-1185">Reference proteome</keyword>
<dbReference type="EC" id="6.1.1.4" evidence="1"/>
<dbReference type="EMBL" id="CT978603">
    <property type="protein sequence ID" value="CAK28091.1"/>
    <property type="molecule type" value="Genomic_DNA"/>
</dbReference>
<dbReference type="SMR" id="A5GT82"/>
<dbReference type="STRING" id="316278.SynRCC307_1188"/>
<dbReference type="KEGG" id="syr:SynRCC307_1188"/>
<dbReference type="eggNOG" id="COG0495">
    <property type="taxonomic scope" value="Bacteria"/>
</dbReference>
<dbReference type="HOGENOM" id="CLU_004427_0_0_3"/>
<dbReference type="OrthoDB" id="9810365at2"/>
<dbReference type="Proteomes" id="UP000001115">
    <property type="component" value="Chromosome"/>
</dbReference>
<dbReference type="GO" id="GO:0005829">
    <property type="term" value="C:cytosol"/>
    <property type="evidence" value="ECO:0007669"/>
    <property type="project" value="TreeGrafter"/>
</dbReference>
<dbReference type="GO" id="GO:0002161">
    <property type="term" value="F:aminoacyl-tRNA deacylase activity"/>
    <property type="evidence" value="ECO:0007669"/>
    <property type="project" value="InterPro"/>
</dbReference>
<dbReference type="GO" id="GO:0005524">
    <property type="term" value="F:ATP binding"/>
    <property type="evidence" value="ECO:0007669"/>
    <property type="project" value="UniProtKB-UniRule"/>
</dbReference>
<dbReference type="GO" id="GO:0004823">
    <property type="term" value="F:leucine-tRNA ligase activity"/>
    <property type="evidence" value="ECO:0007669"/>
    <property type="project" value="UniProtKB-UniRule"/>
</dbReference>
<dbReference type="GO" id="GO:0006429">
    <property type="term" value="P:leucyl-tRNA aminoacylation"/>
    <property type="evidence" value="ECO:0007669"/>
    <property type="project" value="UniProtKB-UniRule"/>
</dbReference>
<dbReference type="CDD" id="cd07958">
    <property type="entry name" value="Anticodon_Ia_Leu_BEm"/>
    <property type="match status" value="1"/>
</dbReference>
<dbReference type="CDD" id="cd00812">
    <property type="entry name" value="LeuRS_core"/>
    <property type="match status" value="1"/>
</dbReference>
<dbReference type="FunFam" id="3.40.50.620:FF:000003">
    <property type="entry name" value="Leucine--tRNA ligase"/>
    <property type="match status" value="1"/>
</dbReference>
<dbReference type="FunFam" id="1.10.730.10:FF:000011">
    <property type="entry name" value="Leucine--tRNA ligase chloroplastic/mitochondrial"/>
    <property type="match status" value="1"/>
</dbReference>
<dbReference type="FunFam" id="3.40.50.620:FF:000100">
    <property type="entry name" value="probable leucine--tRNA ligase, mitochondrial"/>
    <property type="match status" value="1"/>
</dbReference>
<dbReference type="Gene3D" id="3.40.50.620">
    <property type="entry name" value="HUPs"/>
    <property type="match status" value="2"/>
</dbReference>
<dbReference type="Gene3D" id="1.10.730.10">
    <property type="entry name" value="Isoleucyl-tRNA Synthetase, Domain 1"/>
    <property type="match status" value="1"/>
</dbReference>
<dbReference type="Gene3D" id="3.90.740.10">
    <property type="entry name" value="Valyl/Leucyl/Isoleucyl-tRNA synthetase, editing domain"/>
    <property type="match status" value="1"/>
</dbReference>
<dbReference type="HAMAP" id="MF_00049_B">
    <property type="entry name" value="Leu_tRNA_synth_B"/>
    <property type="match status" value="1"/>
</dbReference>
<dbReference type="InterPro" id="IPR001412">
    <property type="entry name" value="aa-tRNA-synth_I_CS"/>
</dbReference>
<dbReference type="InterPro" id="IPR002300">
    <property type="entry name" value="aa-tRNA-synth_Ia"/>
</dbReference>
<dbReference type="InterPro" id="IPR002302">
    <property type="entry name" value="Leu-tRNA-ligase"/>
</dbReference>
<dbReference type="InterPro" id="IPR025709">
    <property type="entry name" value="Leu_tRNA-synth_edit"/>
</dbReference>
<dbReference type="InterPro" id="IPR013155">
    <property type="entry name" value="M/V/L/I-tRNA-synth_anticd-bd"/>
</dbReference>
<dbReference type="InterPro" id="IPR015413">
    <property type="entry name" value="Methionyl/Leucyl_tRNA_Synth"/>
</dbReference>
<dbReference type="InterPro" id="IPR014729">
    <property type="entry name" value="Rossmann-like_a/b/a_fold"/>
</dbReference>
<dbReference type="InterPro" id="IPR009080">
    <property type="entry name" value="tRNAsynth_Ia_anticodon-bd"/>
</dbReference>
<dbReference type="InterPro" id="IPR009008">
    <property type="entry name" value="Val/Leu/Ile-tRNA-synth_edit"/>
</dbReference>
<dbReference type="NCBIfam" id="TIGR00396">
    <property type="entry name" value="leuS_bact"/>
    <property type="match status" value="1"/>
</dbReference>
<dbReference type="PANTHER" id="PTHR43740:SF2">
    <property type="entry name" value="LEUCINE--TRNA LIGASE, MITOCHONDRIAL"/>
    <property type="match status" value="1"/>
</dbReference>
<dbReference type="PANTHER" id="PTHR43740">
    <property type="entry name" value="LEUCYL-TRNA SYNTHETASE"/>
    <property type="match status" value="1"/>
</dbReference>
<dbReference type="Pfam" id="PF08264">
    <property type="entry name" value="Anticodon_1"/>
    <property type="match status" value="1"/>
</dbReference>
<dbReference type="Pfam" id="PF00133">
    <property type="entry name" value="tRNA-synt_1"/>
    <property type="match status" value="2"/>
</dbReference>
<dbReference type="Pfam" id="PF13603">
    <property type="entry name" value="tRNA-synt_1_2"/>
    <property type="match status" value="1"/>
</dbReference>
<dbReference type="Pfam" id="PF09334">
    <property type="entry name" value="tRNA-synt_1g"/>
    <property type="match status" value="1"/>
</dbReference>
<dbReference type="PRINTS" id="PR00985">
    <property type="entry name" value="TRNASYNTHLEU"/>
</dbReference>
<dbReference type="SUPFAM" id="SSF47323">
    <property type="entry name" value="Anticodon-binding domain of a subclass of class I aminoacyl-tRNA synthetases"/>
    <property type="match status" value="1"/>
</dbReference>
<dbReference type="SUPFAM" id="SSF52374">
    <property type="entry name" value="Nucleotidylyl transferase"/>
    <property type="match status" value="1"/>
</dbReference>
<dbReference type="SUPFAM" id="SSF50677">
    <property type="entry name" value="ValRS/IleRS/LeuRS editing domain"/>
    <property type="match status" value="1"/>
</dbReference>
<dbReference type="PROSITE" id="PS00178">
    <property type="entry name" value="AA_TRNA_LIGASE_I"/>
    <property type="match status" value="1"/>
</dbReference>
<reference key="1">
    <citation type="submission" date="2006-05" db="EMBL/GenBank/DDBJ databases">
        <authorList>
            <consortium name="Genoscope"/>
        </authorList>
    </citation>
    <scope>NUCLEOTIDE SEQUENCE [LARGE SCALE GENOMIC DNA]</scope>
    <source>
        <strain>RCC307</strain>
    </source>
</reference>